<protein>
    <recommendedName>
        <fullName evidence="3">Cytochrome c oxidase subunit 6A, mitochondrial</fullName>
    </recommendedName>
    <alternativeName>
        <fullName evidence="3">Cytochrome c oxidase polypeptide VIa</fullName>
    </alternativeName>
</protein>
<accession>Q20779</accession>
<sequence length="128" mass="14743">MNRLAQPATRSVVKTFQRKSSGSFYGSNNVEGFKESYVTPLKQAHNASETWKKIFFIASIPCLALTMYAAFKDHKKHMSHERPEHVEYAFLNVRNKPFPWSDGNHSLFHNKAEQFVPGVGFEADREKH</sequence>
<keyword id="KW-0472">Membrane</keyword>
<keyword id="KW-0496">Mitochondrion</keyword>
<keyword id="KW-0999">Mitochondrion inner membrane</keyword>
<keyword id="KW-0560">Oxidoreductase</keyword>
<keyword id="KW-1185">Reference proteome</keyword>
<keyword id="KW-0809">Transit peptide</keyword>
<keyword id="KW-0812">Transmembrane</keyword>
<keyword id="KW-1133">Transmembrane helix</keyword>
<proteinExistence type="inferred from homology"/>
<comment type="function">
    <text evidence="1">Component of the cytochrome c oxidase, the last enzyme in the mitochondrial electron transport chain which drives oxidative phosphorylation. The respiratory chain contains 3 multisubunit complexes succinate dehydrogenase (complex II, CII), ubiquinol-cytochrome c oxidoreductase (cytochrome b-c1 complex, complex III, CIII) and cytochrome c oxidase (complex IV, CIV), that cooperate to transfer electrons derived from NADH and succinate to molecular oxygen, creating an electrochemical gradient over the inner membrane that drives transmembrane transport and the ATP synthase. Cytochrome c oxidase is the component of the respiratory chain that catalyzes the reduction of oxygen to water. Electrons originating from reduced cytochrome c in the intermembrane space (IMS) are transferred via the dinuclear copper A center (CU(A)) of subunit 2 and heme A of subunit 1 to the active site in subunit 1, a binuclear center (BNC) formed by heme A3 and copper B (CU(B)). The BNC reduces molecular oxygen to 2 water molecules unsing 4 electrons from cytochrome c in the IMS and 4 protons from the mitochondrial matrix.</text>
</comment>
<comment type="pathway">
    <text evidence="1">Energy metabolism; oxidative phosphorylation.</text>
</comment>
<comment type="subunit">
    <text evidence="1">Component of the cytochrome c oxidase (complex IV, CIV), a multisubunit enzyme composed of a catalytic core of 3 subunits and several supernumerary subunits. The complex exists as a monomer or a dimer and forms supercomplexes (SCs) in the inner mitochondrial membrane with ubiquinol-cytochrome c oxidoreductase (cytochrome b-c1 complex, complex III, CIII).</text>
</comment>
<comment type="subcellular location">
    <subcellularLocation>
        <location evidence="1">Mitochondrion inner membrane</location>
        <topology evidence="1">Single-pass membrane protein</topology>
    </subcellularLocation>
</comment>
<comment type="similarity">
    <text evidence="3">Belongs to the cytochrome c oxidase subunit 6A family.</text>
</comment>
<dbReference type="EMBL" id="BX284603">
    <property type="protein sequence ID" value="CCD67407.1"/>
    <property type="molecule type" value="Genomic_DNA"/>
</dbReference>
<dbReference type="PIR" id="E88449">
    <property type="entry name" value="E88449"/>
</dbReference>
<dbReference type="RefSeq" id="NP_498082.1">
    <property type="nucleotide sequence ID" value="NM_065681.9"/>
</dbReference>
<dbReference type="SMR" id="Q20779"/>
<dbReference type="BioGRID" id="40925">
    <property type="interactions" value="59"/>
</dbReference>
<dbReference type="FunCoup" id="Q20779">
    <property type="interactions" value="1288"/>
</dbReference>
<dbReference type="IntAct" id="Q20779">
    <property type="interactions" value="1"/>
</dbReference>
<dbReference type="MINT" id="Q20779"/>
<dbReference type="STRING" id="6239.F54D8.2.1"/>
<dbReference type="PaxDb" id="6239-F54D8.2.1"/>
<dbReference type="PeptideAtlas" id="Q20779"/>
<dbReference type="EnsemblMetazoa" id="F54D8.2.1">
    <property type="protein sequence ID" value="F54D8.2.1"/>
    <property type="gene ID" value="WBGene00006519"/>
</dbReference>
<dbReference type="EnsemblMetazoa" id="F54D8.2.2">
    <property type="protein sequence ID" value="F54D8.2.2"/>
    <property type="gene ID" value="WBGene00006519"/>
</dbReference>
<dbReference type="EnsemblMetazoa" id="F54D8.2.3">
    <property type="protein sequence ID" value="F54D8.2.3"/>
    <property type="gene ID" value="WBGene00006519"/>
</dbReference>
<dbReference type="EnsemblMetazoa" id="F54D8.2.4">
    <property type="protein sequence ID" value="F54D8.2.4"/>
    <property type="gene ID" value="WBGene00006519"/>
</dbReference>
<dbReference type="GeneID" id="175693"/>
<dbReference type="KEGG" id="cel:CELE_F54D8.2"/>
<dbReference type="UCSC" id="F54D8.2.1">
    <property type="organism name" value="c. elegans"/>
</dbReference>
<dbReference type="AGR" id="WB:WBGene00006519"/>
<dbReference type="CTD" id="175693"/>
<dbReference type="WormBase" id="F54D8.2">
    <property type="protein sequence ID" value="CE01308"/>
    <property type="gene ID" value="WBGene00006519"/>
    <property type="gene designation" value="cox-6A"/>
</dbReference>
<dbReference type="eggNOG" id="KOG3469">
    <property type="taxonomic scope" value="Eukaryota"/>
</dbReference>
<dbReference type="GeneTree" id="ENSGT00940000168355"/>
<dbReference type="HOGENOM" id="CLU_122515_0_2_1"/>
<dbReference type="InParanoid" id="Q20779"/>
<dbReference type="OMA" id="LTMYAAF"/>
<dbReference type="OrthoDB" id="5947505at2759"/>
<dbReference type="PhylomeDB" id="Q20779"/>
<dbReference type="UniPathway" id="UPA00705"/>
<dbReference type="PRO" id="PR:Q20779"/>
<dbReference type="Proteomes" id="UP000001940">
    <property type="component" value="Chromosome III"/>
</dbReference>
<dbReference type="Bgee" id="WBGene00006519">
    <property type="expression patterns" value="Expressed in larva and 4 other cell types or tissues"/>
</dbReference>
<dbReference type="GO" id="GO:0005743">
    <property type="term" value="C:mitochondrial inner membrane"/>
    <property type="evidence" value="ECO:0007669"/>
    <property type="project" value="UniProtKB-SubCell"/>
</dbReference>
<dbReference type="GO" id="GO:0005739">
    <property type="term" value="C:mitochondrion"/>
    <property type="evidence" value="ECO:0007005"/>
    <property type="project" value="WormBase"/>
</dbReference>
<dbReference type="GO" id="GO:0045277">
    <property type="term" value="C:respiratory chain complex IV"/>
    <property type="evidence" value="ECO:0000318"/>
    <property type="project" value="GO_Central"/>
</dbReference>
<dbReference type="GO" id="GO:0030234">
    <property type="term" value="F:enzyme regulator activity"/>
    <property type="evidence" value="ECO:0000318"/>
    <property type="project" value="GO_Central"/>
</dbReference>
<dbReference type="GO" id="GO:0016491">
    <property type="term" value="F:oxidoreductase activity"/>
    <property type="evidence" value="ECO:0007669"/>
    <property type="project" value="UniProtKB-KW"/>
</dbReference>
<dbReference type="GO" id="GO:0006123">
    <property type="term" value="P:mitochondrial electron transport, cytochrome c to oxygen"/>
    <property type="evidence" value="ECO:0000318"/>
    <property type="project" value="GO_Central"/>
</dbReference>
<dbReference type="CDD" id="cd00925">
    <property type="entry name" value="Cyt_c_Oxidase_VIa"/>
    <property type="match status" value="1"/>
</dbReference>
<dbReference type="FunFam" id="4.10.95.10:FF:000003">
    <property type="entry name" value="Cytochrome c oxidase subunit 6A, mitochondrial"/>
    <property type="match status" value="1"/>
</dbReference>
<dbReference type="Gene3D" id="4.10.95.10">
    <property type="entry name" value="Cytochrome c oxidase, subunit VIa"/>
    <property type="match status" value="1"/>
</dbReference>
<dbReference type="InterPro" id="IPR001349">
    <property type="entry name" value="Cyt_c_oxidase_su6a"/>
</dbReference>
<dbReference type="InterPro" id="IPR018507">
    <property type="entry name" value="Cyt_c_oxidase_su6a_CS"/>
</dbReference>
<dbReference type="InterPro" id="IPR036418">
    <property type="entry name" value="Cyt_c_oxidase_su6a_sf"/>
</dbReference>
<dbReference type="PANTHER" id="PTHR11504">
    <property type="entry name" value="CYTOCHROME C OXIDASE POLYPEPTIDE VIA"/>
    <property type="match status" value="1"/>
</dbReference>
<dbReference type="PANTHER" id="PTHR11504:SF0">
    <property type="entry name" value="CYTOCHROME C OXIDASE SUBUNIT"/>
    <property type="match status" value="1"/>
</dbReference>
<dbReference type="Pfam" id="PF02046">
    <property type="entry name" value="COX6A"/>
    <property type="match status" value="1"/>
</dbReference>
<dbReference type="SUPFAM" id="SSF81411">
    <property type="entry name" value="Mitochondrial cytochrome c oxidase subunit VIa"/>
    <property type="match status" value="1"/>
</dbReference>
<dbReference type="PROSITE" id="PS01329">
    <property type="entry name" value="COX6A"/>
    <property type="match status" value="1"/>
</dbReference>
<evidence type="ECO:0000250" key="1">
    <source>
        <dbReference type="UniProtKB" id="P32799"/>
    </source>
</evidence>
<evidence type="ECO:0000255" key="2"/>
<evidence type="ECO:0000305" key="3"/>
<evidence type="ECO:0000312" key="4">
    <source>
        <dbReference type="WormBase" id="F54D8.2"/>
    </source>
</evidence>
<reference key="1">
    <citation type="journal article" date="1998" name="Science">
        <title>Genome sequence of the nematode C. elegans: a platform for investigating biology.</title>
        <authorList>
            <consortium name="The C. elegans sequencing consortium"/>
        </authorList>
    </citation>
    <scope>NUCLEOTIDE SEQUENCE [LARGE SCALE GENOMIC DNA]</scope>
    <source>
        <strain>Bristol N2</strain>
    </source>
</reference>
<name>COX6A_CAEEL</name>
<feature type="transit peptide" description="Mitochondrion" evidence="2">
    <location>
        <begin position="1"/>
        <end position="19"/>
    </location>
</feature>
<feature type="chain" id="PRO_0000006125" description="Cytochrome c oxidase subunit 6A, mitochondrial">
    <location>
        <begin position="20"/>
        <end position="128"/>
    </location>
</feature>
<feature type="topological domain" description="Mitochondrial matrix" evidence="3">
    <location>
        <begin position="20"/>
        <end position="53"/>
    </location>
</feature>
<feature type="transmembrane region" description="Helical" evidence="2">
    <location>
        <begin position="54"/>
        <end position="71"/>
    </location>
</feature>
<feature type="topological domain" description="Mitochondrial intermembrane" evidence="3">
    <location>
        <begin position="72"/>
        <end position="128"/>
    </location>
</feature>
<organism>
    <name type="scientific">Caenorhabditis elegans</name>
    <dbReference type="NCBI Taxonomy" id="6239"/>
    <lineage>
        <taxon>Eukaryota</taxon>
        <taxon>Metazoa</taxon>
        <taxon>Ecdysozoa</taxon>
        <taxon>Nematoda</taxon>
        <taxon>Chromadorea</taxon>
        <taxon>Rhabditida</taxon>
        <taxon>Rhabditina</taxon>
        <taxon>Rhabditomorpha</taxon>
        <taxon>Rhabditoidea</taxon>
        <taxon>Rhabditidae</taxon>
        <taxon>Peloderinae</taxon>
        <taxon>Caenorhabditis</taxon>
    </lineage>
</organism>
<gene>
    <name evidence="4" type="primary">cox-6A</name>
    <name evidence="4" type="synonym">tag-174</name>
    <name evidence="4" type="ORF">F54D8.2</name>
</gene>